<organism>
    <name type="scientific">Enterococcus faecalis (strain ATCC 700802 / V583)</name>
    <dbReference type="NCBI Taxonomy" id="226185"/>
    <lineage>
        <taxon>Bacteria</taxon>
        <taxon>Bacillati</taxon>
        <taxon>Bacillota</taxon>
        <taxon>Bacilli</taxon>
        <taxon>Lactobacillales</taxon>
        <taxon>Enterococcaceae</taxon>
        <taxon>Enterococcus</taxon>
    </lineage>
</organism>
<accession>Q820V5</accession>
<feature type="chain" id="PRO_0000407977" description="Enoyl-[acyl-carrier-protein] reductase [NADH] FabI">
    <location>
        <begin position="1"/>
        <end position="250"/>
    </location>
</feature>
<feature type="active site" description="Proton acceptor" evidence="1">
    <location>
        <position position="142"/>
    </location>
</feature>
<feature type="active site" description="Proton acceptor" evidence="1">
    <location>
        <position position="152"/>
    </location>
</feature>
<feature type="binding site" evidence="1">
    <location>
        <position position="12"/>
    </location>
    <ligand>
        <name>NAD(+)</name>
        <dbReference type="ChEBI" id="CHEBI:57540"/>
    </ligand>
</feature>
<feature type="binding site" evidence="1">
    <location>
        <begin position="18"/>
        <end position="19"/>
    </location>
    <ligand>
        <name>NAD(+)</name>
        <dbReference type="ChEBI" id="CHEBI:57540"/>
    </ligand>
</feature>
<feature type="binding site" evidence="1">
    <location>
        <position position="39"/>
    </location>
    <ligand>
        <name>NAD(+)</name>
        <dbReference type="ChEBI" id="CHEBI:57540"/>
    </ligand>
</feature>
<feature type="binding site" evidence="1">
    <location>
        <begin position="61"/>
        <end position="62"/>
    </location>
    <ligand>
        <name>NAD(+)</name>
        <dbReference type="ChEBI" id="CHEBI:57540"/>
    </ligand>
</feature>
<feature type="binding site" evidence="1">
    <location>
        <position position="89"/>
    </location>
    <ligand>
        <name>NAD(+)</name>
        <dbReference type="ChEBI" id="CHEBI:57540"/>
    </ligand>
</feature>
<feature type="binding site" evidence="1">
    <location>
        <position position="92"/>
    </location>
    <ligand>
        <name>substrate</name>
    </ligand>
</feature>
<feature type="binding site" evidence="1">
    <location>
        <position position="159"/>
    </location>
    <ligand>
        <name>NAD(+)</name>
        <dbReference type="ChEBI" id="CHEBI:57540"/>
    </ligand>
</feature>
<feature type="binding site" evidence="1">
    <location>
        <begin position="188"/>
        <end position="192"/>
    </location>
    <ligand>
        <name>NAD(+)</name>
        <dbReference type="ChEBI" id="CHEBI:57540"/>
    </ligand>
</feature>
<feature type="site" description="Involved in acyl-ACP binding" evidence="1">
    <location>
        <position position="197"/>
    </location>
</feature>
<name>FABI_ENTFA</name>
<protein>
    <recommendedName>
        <fullName>Enoyl-[acyl-carrier-protein] reductase [NADH] FabI</fullName>
        <shortName>ENR</shortName>
        <ecNumber>1.3.1.9</ecNumber>
    </recommendedName>
    <alternativeName>
        <fullName>NADH-dependent enoyl-ACP reductase</fullName>
    </alternativeName>
</protein>
<reference key="1">
    <citation type="journal article" date="2003" name="Science">
        <title>Role of mobile DNA in the evolution of vancomycin-resistant Enterococcus faecalis.</title>
        <authorList>
            <person name="Paulsen I.T."/>
            <person name="Banerjei L."/>
            <person name="Myers G.S.A."/>
            <person name="Nelson K.E."/>
            <person name="Seshadri R."/>
            <person name="Read T.D."/>
            <person name="Fouts D.E."/>
            <person name="Eisen J.A."/>
            <person name="Gill S.R."/>
            <person name="Heidelberg J.F."/>
            <person name="Tettelin H."/>
            <person name="Dodson R.J."/>
            <person name="Umayam L.A."/>
            <person name="Brinkac L.M."/>
            <person name="Beanan M.J."/>
            <person name="Daugherty S.C."/>
            <person name="DeBoy R.T."/>
            <person name="Durkin S.A."/>
            <person name="Kolonay J.F."/>
            <person name="Madupu R."/>
            <person name="Nelson W.C."/>
            <person name="Vamathevan J.J."/>
            <person name="Tran B."/>
            <person name="Upton J."/>
            <person name="Hansen T."/>
            <person name="Shetty J."/>
            <person name="Khouri H.M."/>
            <person name="Utterback T.R."/>
            <person name="Radune D."/>
            <person name="Ketchum K.A."/>
            <person name="Dougherty B.A."/>
            <person name="Fraser C.M."/>
        </authorList>
    </citation>
    <scope>NUCLEOTIDE SEQUENCE [LARGE SCALE GENOMIC DNA]</scope>
    <source>
        <strain>ATCC 700802 / V583</strain>
    </source>
</reference>
<reference key="2">
    <citation type="journal article" date="2008" name="Biochemistry">
        <title>Mechanism and inhibition of saFabI, the enoyl reductase from Staphylococcus aureus.</title>
        <authorList>
            <person name="Xu H."/>
            <person name="Sullivan T.J."/>
            <person name="Sekiguchi J."/>
            <person name="Kirikae T."/>
            <person name="Ojima I."/>
            <person name="Stratton C.F."/>
            <person name="Mao W."/>
            <person name="Rock F.L."/>
            <person name="Alley M.R."/>
            <person name="Johnson F."/>
            <person name="Walker S.G."/>
            <person name="Tonge P.J."/>
        </authorList>
    </citation>
    <scope>ACTIVITY REGULATION</scope>
</reference>
<gene>
    <name type="primary">fabI</name>
    <name type="ordered locus">EF_0282</name>
</gene>
<evidence type="ECO:0000250" key="1"/>
<evidence type="ECO:0000269" key="2">
    <source>
    </source>
</evidence>
<evidence type="ECO:0000305" key="3"/>
<sequence>MFLQNKNVVVMGVANKKSIAWGCAKALKDQGANVIYTYQNERMKKQVVKLADENDLLVECDVASDASIQAAFETIKNEVGTIDGLVHAIAFAKKEELSGNVSDITRDGFLLAQDISSYSLLAVTHYAKPLLNPGSGIVTLTYLGSERAIPNYNMMGIAKASLETAVKYLAFELAADKIRVNGISAGAIKTLAVTGVKDYDQLISISNERTPDKTGVTIEEVGNTCAFLVSDLASGVVGDIIYVDKGVHLT</sequence>
<comment type="function">
    <text evidence="1">Catalyzes the reduction of a carbon-carbon double bond in an enoyl moiety that is covalently linked to an acyl carrier protein (ACP). Involved in the elongation cycle of fatty acid which are used in the lipid metabolism (By similarity).</text>
</comment>
<comment type="catalytic activity">
    <reaction>
        <text>a 2,3-saturated acyl-[ACP] + NAD(+) = a (2E)-enoyl-[ACP] + NADH + H(+)</text>
        <dbReference type="Rhea" id="RHEA:10240"/>
        <dbReference type="Rhea" id="RHEA-COMP:9925"/>
        <dbReference type="Rhea" id="RHEA-COMP:9926"/>
        <dbReference type="ChEBI" id="CHEBI:15378"/>
        <dbReference type="ChEBI" id="CHEBI:57540"/>
        <dbReference type="ChEBI" id="CHEBI:57945"/>
        <dbReference type="ChEBI" id="CHEBI:78784"/>
        <dbReference type="ChEBI" id="CHEBI:78785"/>
        <dbReference type="EC" id="1.3.1.9"/>
    </reaction>
</comment>
<comment type="activity regulation">
    <text evidence="2">Inhibited by triclosan and its diphenyl ether analgues.</text>
</comment>
<comment type="pathway">
    <text>Lipid metabolism; fatty acid biosynthesis.</text>
</comment>
<comment type="subunit">
    <text evidence="1">Homotetramer.</text>
</comment>
<comment type="similarity">
    <text evidence="3">Belongs to the short-chain dehydrogenases/reductases (SDR) family. FabI subfamily.</text>
</comment>
<keyword id="KW-0275">Fatty acid biosynthesis</keyword>
<keyword id="KW-0276">Fatty acid metabolism</keyword>
<keyword id="KW-0444">Lipid biosynthesis</keyword>
<keyword id="KW-0443">Lipid metabolism</keyword>
<keyword id="KW-0520">NAD</keyword>
<keyword id="KW-0560">Oxidoreductase</keyword>
<keyword id="KW-1185">Reference proteome</keyword>
<dbReference type="EC" id="1.3.1.9"/>
<dbReference type="EMBL" id="AE016830">
    <property type="protein sequence ID" value="AAO80145.1"/>
    <property type="molecule type" value="Genomic_DNA"/>
</dbReference>
<dbReference type="RefSeq" id="NP_814074.1">
    <property type="nucleotide sequence ID" value="NC_004668.1"/>
</dbReference>
<dbReference type="RefSeq" id="WP_002387650.1">
    <property type="nucleotide sequence ID" value="NZ_KE136524.1"/>
</dbReference>
<dbReference type="SMR" id="Q820V5"/>
<dbReference type="STRING" id="226185.EF_0282"/>
<dbReference type="EnsemblBacteria" id="AAO80145">
    <property type="protein sequence ID" value="AAO80145"/>
    <property type="gene ID" value="EF_0282"/>
</dbReference>
<dbReference type="KEGG" id="efa:EF0282"/>
<dbReference type="PATRIC" id="fig|226185.45.peg.3047"/>
<dbReference type="eggNOG" id="COG0623">
    <property type="taxonomic scope" value="Bacteria"/>
</dbReference>
<dbReference type="HOGENOM" id="CLU_010194_10_1_9"/>
<dbReference type="UniPathway" id="UPA00094"/>
<dbReference type="Proteomes" id="UP000001415">
    <property type="component" value="Chromosome"/>
</dbReference>
<dbReference type="GO" id="GO:0004318">
    <property type="term" value="F:enoyl-[acyl-carrier-protein] reductase (NADH) activity"/>
    <property type="evidence" value="ECO:0000250"/>
    <property type="project" value="UniProtKB"/>
</dbReference>
<dbReference type="GO" id="GO:0030497">
    <property type="term" value="P:fatty acid elongation"/>
    <property type="evidence" value="ECO:0000250"/>
    <property type="project" value="UniProtKB"/>
</dbReference>
<dbReference type="CDD" id="cd05372">
    <property type="entry name" value="ENR_SDR"/>
    <property type="match status" value="1"/>
</dbReference>
<dbReference type="FunFam" id="3.40.50.720:FF:000169">
    <property type="entry name" value="Enoyl-[acyl-carrier-protein] reductase [NADH]"/>
    <property type="match status" value="1"/>
</dbReference>
<dbReference type="Gene3D" id="1.10.8.400">
    <property type="entry name" value="Enoyl acyl carrier protein reductase"/>
    <property type="match status" value="1"/>
</dbReference>
<dbReference type="Gene3D" id="3.40.50.720">
    <property type="entry name" value="NAD(P)-binding Rossmann-like Domain"/>
    <property type="match status" value="1"/>
</dbReference>
<dbReference type="InterPro" id="IPR014358">
    <property type="entry name" value="Enoyl-ACP_Rdtase_NADH"/>
</dbReference>
<dbReference type="InterPro" id="IPR036291">
    <property type="entry name" value="NAD(P)-bd_dom_sf"/>
</dbReference>
<dbReference type="InterPro" id="IPR002347">
    <property type="entry name" value="SDR_fam"/>
</dbReference>
<dbReference type="NCBIfam" id="NF004748">
    <property type="entry name" value="PRK06079.1"/>
    <property type="match status" value="1"/>
</dbReference>
<dbReference type="PANTHER" id="PTHR43159">
    <property type="entry name" value="ENOYL-[ACYL-CARRIER-PROTEIN] REDUCTASE"/>
    <property type="match status" value="1"/>
</dbReference>
<dbReference type="PANTHER" id="PTHR43159:SF2">
    <property type="entry name" value="ENOYL-[ACYL-CARRIER-PROTEIN] REDUCTASE [NADH], CHLOROPLASTIC"/>
    <property type="match status" value="1"/>
</dbReference>
<dbReference type="Pfam" id="PF13561">
    <property type="entry name" value="adh_short_C2"/>
    <property type="match status" value="1"/>
</dbReference>
<dbReference type="PIRSF" id="PIRSF000094">
    <property type="entry name" value="Enoyl-ACP_rdct"/>
    <property type="match status" value="1"/>
</dbReference>
<dbReference type="PRINTS" id="PR00081">
    <property type="entry name" value="GDHRDH"/>
</dbReference>
<dbReference type="SUPFAM" id="SSF51735">
    <property type="entry name" value="NAD(P)-binding Rossmann-fold domains"/>
    <property type="match status" value="1"/>
</dbReference>
<proteinExistence type="inferred from homology"/>